<organism>
    <name type="scientific">Neisseria meningitidis serogroup C / serotype 2a (strain ATCC 700532 / DSM 15464 / FAM18)</name>
    <dbReference type="NCBI Taxonomy" id="272831"/>
    <lineage>
        <taxon>Bacteria</taxon>
        <taxon>Pseudomonadati</taxon>
        <taxon>Pseudomonadota</taxon>
        <taxon>Betaproteobacteria</taxon>
        <taxon>Neisseriales</taxon>
        <taxon>Neisseriaceae</taxon>
        <taxon>Neisseria</taxon>
    </lineage>
</organism>
<sequence>MTLGLVGRKVGMTRVFDEQGVSVPVTVLDMSANRVTQVKSKDTDGYTAVQVTFGQKKANRVNKAEAGHFAKAGVEAGRGLIEFALTEEKLAELKAGDEITVSMFEVGQLVDVTGTSKGKGFSGTIKRHNFGAQRTSHGNSRSHRVPGSIGMAQDPGRVFPGKRMAGQYGNTKATVQKLEVVRVDAERQLLLVKGAVPGAVNSDVVVRPSVKVGA</sequence>
<keyword id="KW-0488">Methylation</keyword>
<keyword id="KW-0687">Ribonucleoprotein</keyword>
<keyword id="KW-0689">Ribosomal protein</keyword>
<keyword id="KW-0694">RNA-binding</keyword>
<keyword id="KW-0699">rRNA-binding</keyword>
<comment type="function">
    <text evidence="1">One of the primary rRNA binding proteins, it binds directly near the 3'-end of the 23S rRNA, where it nucleates assembly of the 50S subunit.</text>
</comment>
<comment type="subunit">
    <text evidence="1">Part of the 50S ribosomal subunit. Forms a cluster with proteins L14 and L19.</text>
</comment>
<comment type="PTM">
    <text evidence="1">Methylated by PrmB.</text>
</comment>
<comment type="similarity">
    <text evidence="1">Belongs to the universal ribosomal protein uL3 family.</text>
</comment>
<dbReference type="EMBL" id="AM421808">
    <property type="protein sequence ID" value="CAM09451.1"/>
    <property type="molecule type" value="Genomic_DNA"/>
</dbReference>
<dbReference type="RefSeq" id="WP_002215400.1">
    <property type="nucleotide sequence ID" value="NC_008767.1"/>
</dbReference>
<dbReference type="SMR" id="A1KRH3"/>
<dbReference type="GeneID" id="93387217"/>
<dbReference type="KEGG" id="nmc:NMC0132"/>
<dbReference type="HOGENOM" id="CLU_044142_4_1_4"/>
<dbReference type="Proteomes" id="UP000002286">
    <property type="component" value="Chromosome"/>
</dbReference>
<dbReference type="GO" id="GO:0022625">
    <property type="term" value="C:cytosolic large ribosomal subunit"/>
    <property type="evidence" value="ECO:0007669"/>
    <property type="project" value="TreeGrafter"/>
</dbReference>
<dbReference type="GO" id="GO:0019843">
    <property type="term" value="F:rRNA binding"/>
    <property type="evidence" value="ECO:0007669"/>
    <property type="project" value="UniProtKB-UniRule"/>
</dbReference>
<dbReference type="GO" id="GO:0003735">
    <property type="term" value="F:structural constituent of ribosome"/>
    <property type="evidence" value="ECO:0007669"/>
    <property type="project" value="InterPro"/>
</dbReference>
<dbReference type="GO" id="GO:0006412">
    <property type="term" value="P:translation"/>
    <property type="evidence" value="ECO:0007669"/>
    <property type="project" value="UniProtKB-UniRule"/>
</dbReference>
<dbReference type="FunFam" id="2.40.30.10:FF:000004">
    <property type="entry name" value="50S ribosomal protein L3"/>
    <property type="match status" value="1"/>
</dbReference>
<dbReference type="FunFam" id="3.30.160.810:FF:000001">
    <property type="entry name" value="50S ribosomal protein L3"/>
    <property type="match status" value="1"/>
</dbReference>
<dbReference type="Gene3D" id="3.30.160.810">
    <property type="match status" value="1"/>
</dbReference>
<dbReference type="Gene3D" id="2.40.30.10">
    <property type="entry name" value="Translation factors"/>
    <property type="match status" value="1"/>
</dbReference>
<dbReference type="HAMAP" id="MF_01325_B">
    <property type="entry name" value="Ribosomal_uL3_B"/>
    <property type="match status" value="1"/>
</dbReference>
<dbReference type="InterPro" id="IPR000597">
    <property type="entry name" value="Ribosomal_uL3"/>
</dbReference>
<dbReference type="InterPro" id="IPR019927">
    <property type="entry name" value="Ribosomal_uL3_bac/org-type"/>
</dbReference>
<dbReference type="InterPro" id="IPR019926">
    <property type="entry name" value="Ribosomal_uL3_CS"/>
</dbReference>
<dbReference type="InterPro" id="IPR009000">
    <property type="entry name" value="Transl_B-barrel_sf"/>
</dbReference>
<dbReference type="NCBIfam" id="TIGR03625">
    <property type="entry name" value="L3_bact"/>
    <property type="match status" value="1"/>
</dbReference>
<dbReference type="PANTHER" id="PTHR11229">
    <property type="entry name" value="50S RIBOSOMAL PROTEIN L3"/>
    <property type="match status" value="1"/>
</dbReference>
<dbReference type="PANTHER" id="PTHR11229:SF16">
    <property type="entry name" value="LARGE RIBOSOMAL SUBUNIT PROTEIN UL3C"/>
    <property type="match status" value="1"/>
</dbReference>
<dbReference type="Pfam" id="PF00297">
    <property type="entry name" value="Ribosomal_L3"/>
    <property type="match status" value="1"/>
</dbReference>
<dbReference type="SUPFAM" id="SSF50447">
    <property type="entry name" value="Translation proteins"/>
    <property type="match status" value="1"/>
</dbReference>
<dbReference type="PROSITE" id="PS00474">
    <property type="entry name" value="RIBOSOMAL_L3"/>
    <property type="match status" value="1"/>
</dbReference>
<feature type="chain" id="PRO_1000052095" description="Large ribosomal subunit protein uL3">
    <location>
        <begin position="1"/>
        <end position="214"/>
    </location>
</feature>
<feature type="region of interest" description="Disordered" evidence="2">
    <location>
        <begin position="131"/>
        <end position="155"/>
    </location>
</feature>
<feature type="modified residue" description="N5-methylglutamine" evidence="1">
    <location>
        <position position="153"/>
    </location>
</feature>
<name>RL3_NEIMF</name>
<reference key="1">
    <citation type="journal article" date="2007" name="PLoS Genet.">
        <title>Meningococcal genetic variation mechanisms viewed through comparative analysis of serogroup C strain FAM18.</title>
        <authorList>
            <person name="Bentley S.D."/>
            <person name="Vernikos G.S."/>
            <person name="Snyder L.A.S."/>
            <person name="Churcher C."/>
            <person name="Arrowsmith C."/>
            <person name="Chillingworth T."/>
            <person name="Cronin A."/>
            <person name="Davis P.H."/>
            <person name="Holroyd N.E."/>
            <person name="Jagels K."/>
            <person name="Maddison M."/>
            <person name="Moule S."/>
            <person name="Rabbinowitsch E."/>
            <person name="Sharp S."/>
            <person name="Unwin L."/>
            <person name="Whitehead S."/>
            <person name="Quail M.A."/>
            <person name="Achtman M."/>
            <person name="Barrell B.G."/>
            <person name="Saunders N.J."/>
            <person name="Parkhill J."/>
        </authorList>
    </citation>
    <scope>NUCLEOTIDE SEQUENCE [LARGE SCALE GENOMIC DNA]</scope>
    <source>
        <strain>ATCC 700532 / DSM 15464 / FAM18</strain>
    </source>
</reference>
<evidence type="ECO:0000255" key="1">
    <source>
        <dbReference type="HAMAP-Rule" id="MF_01325"/>
    </source>
</evidence>
<evidence type="ECO:0000256" key="2">
    <source>
        <dbReference type="SAM" id="MobiDB-lite"/>
    </source>
</evidence>
<evidence type="ECO:0000305" key="3"/>
<gene>
    <name evidence="1" type="primary">rplC</name>
    <name type="ordered locus">NMC0132</name>
</gene>
<proteinExistence type="inferred from homology"/>
<protein>
    <recommendedName>
        <fullName evidence="1">Large ribosomal subunit protein uL3</fullName>
    </recommendedName>
    <alternativeName>
        <fullName evidence="3">50S ribosomal protein L3</fullName>
    </alternativeName>
</protein>
<accession>A1KRH3</accession>